<name>RS15_MARN8</name>
<comment type="function">
    <text evidence="1">One of the primary rRNA binding proteins, it binds directly to 16S rRNA where it helps nucleate assembly of the platform of the 30S subunit by binding and bridging several RNA helices of the 16S rRNA.</text>
</comment>
<comment type="function">
    <text evidence="1">Forms an intersubunit bridge (bridge B4) with the 23S rRNA of the 50S subunit in the ribosome.</text>
</comment>
<comment type="subunit">
    <text evidence="1">Part of the 30S ribosomal subunit. Forms a bridge to the 50S subunit in the 70S ribosome, contacting the 23S rRNA.</text>
</comment>
<comment type="similarity">
    <text evidence="1">Belongs to the universal ribosomal protein uS15 family.</text>
</comment>
<feature type="chain" id="PRO_1000054808" description="Small ribosomal subunit protein uS15">
    <location>
        <begin position="1"/>
        <end position="89"/>
    </location>
</feature>
<accession>A1U5Z7</accession>
<sequence length="89" mass="10312">MALSASEKAQIVKDFQQGDGDTGSPEVQVALLSANINKLQDHFKANKQDHHSRRGLIRMVNQRRKLLDYLKRKNADRYLELIQRLGLRR</sequence>
<gene>
    <name evidence="1" type="primary">rpsO</name>
    <name type="ordered locus">Maqu_3345</name>
</gene>
<evidence type="ECO:0000255" key="1">
    <source>
        <dbReference type="HAMAP-Rule" id="MF_01343"/>
    </source>
</evidence>
<evidence type="ECO:0000305" key="2"/>
<proteinExistence type="inferred from homology"/>
<dbReference type="EMBL" id="CP000514">
    <property type="protein sequence ID" value="ABM20416.1"/>
    <property type="molecule type" value="Genomic_DNA"/>
</dbReference>
<dbReference type="RefSeq" id="WP_011786757.1">
    <property type="nucleotide sequence ID" value="NC_008740.1"/>
</dbReference>
<dbReference type="SMR" id="A1U5Z7"/>
<dbReference type="STRING" id="351348.Maqu_3345"/>
<dbReference type="KEGG" id="maq:Maqu_3345"/>
<dbReference type="eggNOG" id="COG0184">
    <property type="taxonomic scope" value="Bacteria"/>
</dbReference>
<dbReference type="HOGENOM" id="CLU_148518_0_0_6"/>
<dbReference type="OrthoDB" id="9799262at2"/>
<dbReference type="Proteomes" id="UP000000998">
    <property type="component" value="Chromosome"/>
</dbReference>
<dbReference type="GO" id="GO:0022627">
    <property type="term" value="C:cytosolic small ribosomal subunit"/>
    <property type="evidence" value="ECO:0007669"/>
    <property type="project" value="TreeGrafter"/>
</dbReference>
<dbReference type="GO" id="GO:0019843">
    <property type="term" value="F:rRNA binding"/>
    <property type="evidence" value="ECO:0007669"/>
    <property type="project" value="UniProtKB-UniRule"/>
</dbReference>
<dbReference type="GO" id="GO:0003735">
    <property type="term" value="F:structural constituent of ribosome"/>
    <property type="evidence" value="ECO:0007669"/>
    <property type="project" value="InterPro"/>
</dbReference>
<dbReference type="GO" id="GO:0006412">
    <property type="term" value="P:translation"/>
    <property type="evidence" value="ECO:0007669"/>
    <property type="project" value="UniProtKB-UniRule"/>
</dbReference>
<dbReference type="CDD" id="cd00353">
    <property type="entry name" value="Ribosomal_S15p_S13e"/>
    <property type="match status" value="1"/>
</dbReference>
<dbReference type="FunFam" id="1.10.287.10:FF:000002">
    <property type="entry name" value="30S ribosomal protein S15"/>
    <property type="match status" value="1"/>
</dbReference>
<dbReference type="Gene3D" id="6.10.250.3130">
    <property type="match status" value="1"/>
</dbReference>
<dbReference type="Gene3D" id="1.10.287.10">
    <property type="entry name" value="S15/NS1, RNA-binding"/>
    <property type="match status" value="1"/>
</dbReference>
<dbReference type="HAMAP" id="MF_01343_B">
    <property type="entry name" value="Ribosomal_uS15_B"/>
    <property type="match status" value="1"/>
</dbReference>
<dbReference type="InterPro" id="IPR000589">
    <property type="entry name" value="Ribosomal_uS15"/>
</dbReference>
<dbReference type="InterPro" id="IPR005290">
    <property type="entry name" value="Ribosomal_uS15_bac-type"/>
</dbReference>
<dbReference type="InterPro" id="IPR009068">
    <property type="entry name" value="uS15_NS1_RNA-bd_sf"/>
</dbReference>
<dbReference type="NCBIfam" id="TIGR00952">
    <property type="entry name" value="S15_bact"/>
    <property type="match status" value="1"/>
</dbReference>
<dbReference type="PANTHER" id="PTHR23321">
    <property type="entry name" value="RIBOSOMAL PROTEIN S15, BACTERIAL AND ORGANELLAR"/>
    <property type="match status" value="1"/>
</dbReference>
<dbReference type="PANTHER" id="PTHR23321:SF26">
    <property type="entry name" value="SMALL RIBOSOMAL SUBUNIT PROTEIN US15M"/>
    <property type="match status" value="1"/>
</dbReference>
<dbReference type="Pfam" id="PF00312">
    <property type="entry name" value="Ribosomal_S15"/>
    <property type="match status" value="1"/>
</dbReference>
<dbReference type="SMART" id="SM01387">
    <property type="entry name" value="Ribosomal_S15"/>
    <property type="match status" value="1"/>
</dbReference>
<dbReference type="SUPFAM" id="SSF47060">
    <property type="entry name" value="S15/NS1 RNA-binding domain"/>
    <property type="match status" value="1"/>
</dbReference>
<dbReference type="PROSITE" id="PS00362">
    <property type="entry name" value="RIBOSOMAL_S15"/>
    <property type="match status" value="1"/>
</dbReference>
<organism>
    <name type="scientific">Marinobacter nauticus (strain ATCC 700491 / DSM 11845 / VT8)</name>
    <name type="common">Marinobacter aquaeolei</name>
    <dbReference type="NCBI Taxonomy" id="351348"/>
    <lineage>
        <taxon>Bacteria</taxon>
        <taxon>Pseudomonadati</taxon>
        <taxon>Pseudomonadota</taxon>
        <taxon>Gammaproteobacteria</taxon>
        <taxon>Pseudomonadales</taxon>
        <taxon>Marinobacteraceae</taxon>
        <taxon>Marinobacter</taxon>
    </lineage>
</organism>
<keyword id="KW-0687">Ribonucleoprotein</keyword>
<keyword id="KW-0689">Ribosomal protein</keyword>
<keyword id="KW-0694">RNA-binding</keyword>
<keyword id="KW-0699">rRNA-binding</keyword>
<protein>
    <recommendedName>
        <fullName evidence="1">Small ribosomal subunit protein uS15</fullName>
    </recommendedName>
    <alternativeName>
        <fullName evidence="2">30S ribosomal protein S15</fullName>
    </alternativeName>
</protein>
<reference key="1">
    <citation type="journal article" date="2011" name="Appl. Environ. Microbiol.">
        <title>Genomic potential of Marinobacter aquaeolei, a biogeochemical 'opportunitroph'.</title>
        <authorList>
            <person name="Singer E."/>
            <person name="Webb E.A."/>
            <person name="Nelson W.C."/>
            <person name="Heidelberg J.F."/>
            <person name="Ivanova N."/>
            <person name="Pati A."/>
            <person name="Edwards K.J."/>
        </authorList>
    </citation>
    <scope>NUCLEOTIDE SEQUENCE [LARGE SCALE GENOMIC DNA]</scope>
    <source>
        <strain>ATCC 700491 / DSM 11845 / VT8</strain>
    </source>
</reference>